<comment type="catalytic activity">
    <reaction>
        <text>Random endo-hydrolysis of N-acetyl-beta-D-glucosaminide (1-&gt;4)-beta-linkages in chitin and chitodextrins.</text>
        <dbReference type="EC" id="3.2.1.14"/>
    </reaction>
</comment>
<comment type="similarity">
    <text evidence="6">Belongs to the glycosyl hydrolase 18 family. Chitinase class II subfamily.</text>
</comment>
<comment type="sequence caution" evidence="6">
    <conflict type="erroneous initiation">
        <sequence resource="EMBL-CDS" id="AAM50881"/>
    </conflict>
</comment>
<dbReference type="EC" id="3.2.1.14"/>
<dbReference type="EMBL" id="AE014134">
    <property type="protein sequence ID" value="EAA46011.1"/>
    <property type="molecule type" value="Genomic_DNA"/>
</dbReference>
<dbReference type="EMBL" id="BT021372">
    <property type="protein sequence ID" value="AAX33520.1"/>
    <property type="molecule type" value="mRNA"/>
</dbReference>
<dbReference type="EMBL" id="AF026500">
    <property type="protein sequence ID" value="AAB81858.1"/>
    <property type="molecule type" value="Genomic_DNA"/>
</dbReference>
<dbReference type="EMBL" id="AF026502">
    <property type="protein sequence ID" value="AAB81860.1"/>
    <property type="molecule type" value="Genomic_DNA"/>
</dbReference>
<dbReference type="EMBL" id="AY119021">
    <property type="protein sequence ID" value="AAM50881.1"/>
    <property type="status" value="ALT_INIT"/>
    <property type="molecule type" value="mRNA"/>
</dbReference>
<dbReference type="RefSeq" id="NP_001036422.1">
    <property type="nucleotide sequence ID" value="NM_001042957.2"/>
</dbReference>
<dbReference type="RefSeq" id="NP_001260697.1">
    <property type="nucleotide sequence ID" value="NM_001273768.1"/>
</dbReference>
<dbReference type="RefSeq" id="NP_001260698.1">
    <property type="nucleotide sequence ID" value="NM_001273769.1"/>
</dbReference>
<dbReference type="SMR" id="Q9W5U2"/>
<dbReference type="BioGRID" id="78241">
    <property type="interactions" value="3"/>
</dbReference>
<dbReference type="DIP" id="DIP-19404N"/>
<dbReference type="FunCoup" id="Q9W5U2">
    <property type="interactions" value="65"/>
</dbReference>
<dbReference type="STRING" id="7227.FBpp0303592"/>
<dbReference type="CAZy" id="CBM14">
    <property type="family name" value="Carbohydrate-Binding Module Family 14"/>
</dbReference>
<dbReference type="CAZy" id="GH18">
    <property type="family name" value="Glycoside Hydrolase Family 18"/>
</dbReference>
<dbReference type="PaxDb" id="7227-FBpp0110419"/>
<dbReference type="DNASU" id="3355116"/>
<dbReference type="EnsemblMetazoa" id="FBtr0111127">
    <property type="protein sequence ID" value="FBpp0110419"/>
    <property type="gene ID" value="FBgn0250907"/>
</dbReference>
<dbReference type="EnsemblMetazoa" id="FBtr0331165">
    <property type="protein sequence ID" value="FBpp0303592"/>
    <property type="gene ID" value="FBgn0250907"/>
</dbReference>
<dbReference type="EnsemblMetazoa" id="FBtr0331166">
    <property type="protein sequence ID" value="FBpp0303593"/>
    <property type="gene ID" value="FBgn0250907"/>
</dbReference>
<dbReference type="GeneID" id="3355116"/>
<dbReference type="KEGG" id="dme:Dmel_CG18140"/>
<dbReference type="UCSC" id="CG18140-RA">
    <property type="organism name" value="d. melanogaster"/>
</dbReference>
<dbReference type="AGR" id="FB:FBgn0250907"/>
<dbReference type="CTD" id="3355116"/>
<dbReference type="FlyBase" id="FBgn0250907">
    <property type="gene designation" value="Cht10"/>
</dbReference>
<dbReference type="VEuPathDB" id="VectorBase:FBgn0250907"/>
<dbReference type="eggNOG" id="KOG2806">
    <property type="taxonomic scope" value="Eukaryota"/>
</dbReference>
<dbReference type="GeneTree" id="ENSGT00940000175593"/>
<dbReference type="HOGENOM" id="CLU_228329_0_0_1"/>
<dbReference type="InParanoid" id="Q9W5U2"/>
<dbReference type="OMA" id="TRICDWP"/>
<dbReference type="OrthoDB" id="76388at2759"/>
<dbReference type="PhylomeDB" id="Q9W5U2"/>
<dbReference type="Reactome" id="R-DME-6798695">
    <property type="pathway name" value="Neutrophil degranulation"/>
</dbReference>
<dbReference type="BioGRID-ORCS" id="3355116">
    <property type="hits" value="0 hits in 1 CRISPR screen"/>
</dbReference>
<dbReference type="GenomeRNAi" id="3355116"/>
<dbReference type="PRO" id="PR:Q9W5U2"/>
<dbReference type="Proteomes" id="UP000000803">
    <property type="component" value="Chromosome 2L"/>
</dbReference>
<dbReference type="Bgee" id="FBgn0250907">
    <property type="expression patterns" value="Expressed in eye disc (Drosophila) and 42 other cell types or tissues"/>
</dbReference>
<dbReference type="ExpressionAtlas" id="Q9W5U2">
    <property type="expression patterns" value="baseline and differential"/>
</dbReference>
<dbReference type="GO" id="GO:0005576">
    <property type="term" value="C:extracellular region"/>
    <property type="evidence" value="ECO:0000318"/>
    <property type="project" value="GO_Central"/>
</dbReference>
<dbReference type="GO" id="GO:0008061">
    <property type="term" value="F:chitin binding"/>
    <property type="evidence" value="ECO:0007669"/>
    <property type="project" value="UniProtKB-KW"/>
</dbReference>
<dbReference type="GO" id="GO:0004568">
    <property type="term" value="F:chitinase activity"/>
    <property type="evidence" value="ECO:0000315"/>
    <property type="project" value="FlyBase"/>
</dbReference>
<dbReference type="GO" id="GO:0008843">
    <property type="term" value="F:endochitinase activity"/>
    <property type="evidence" value="ECO:0007669"/>
    <property type="project" value="UniProtKB-EC"/>
</dbReference>
<dbReference type="GO" id="GO:0006032">
    <property type="term" value="P:chitin catabolic process"/>
    <property type="evidence" value="ECO:0000315"/>
    <property type="project" value="FlyBase"/>
</dbReference>
<dbReference type="GO" id="GO:0000272">
    <property type="term" value="P:polysaccharide catabolic process"/>
    <property type="evidence" value="ECO:0007669"/>
    <property type="project" value="UniProtKB-KW"/>
</dbReference>
<dbReference type="CDD" id="cd02872">
    <property type="entry name" value="GH18_chitolectin_chitotriosidase"/>
    <property type="match status" value="4"/>
</dbReference>
<dbReference type="FunFam" id="3.20.20.80:FF:000007">
    <property type="entry name" value="Acidic mammalian chitinase"/>
    <property type="match status" value="3"/>
</dbReference>
<dbReference type="FunFam" id="3.20.20.80:FF:000048">
    <property type="entry name" value="Brain chitinase and chia"/>
    <property type="match status" value="1"/>
</dbReference>
<dbReference type="FunFam" id="3.10.50.10:FF:000001">
    <property type="entry name" value="Chitinase 3-like 1"/>
    <property type="match status" value="3"/>
</dbReference>
<dbReference type="FunFam" id="2.170.140.10:FF:000004">
    <property type="entry name" value="Chitinase 5"/>
    <property type="match status" value="1"/>
</dbReference>
<dbReference type="FunFam" id="3.10.50.10:FF:000004">
    <property type="entry name" value="Chitinase 5"/>
    <property type="match status" value="1"/>
</dbReference>
<dbReference type="Gene3D" id="3.10.50.10">
    <property type="match status" value="4"/>
</dbReference>
<dbReference type="Gene3D" id="2.170.140.10">
    <property type="entry name" value="Chitin binding domain"/>
    <property type="match status" value="4"/>
</dbReference>
<dbReference type="Gene3D" id="3.20.20.80">
    <property type="entry name" value="Glycosidases"/>
    <property type="match status" value="4"/>
</dbReference>
<dbReference type="InterPro" id="IPR002557">
    <property type="entry name" value="Chitin-bd_dom"/>
</dbReference>
<dbReference type="InterPro" id="IPR036508">
    <property type="entry name" value="Chitin-bd_dom_sf"/>
</dbReference>
<dbReference type="InterPro" id="IPR011583">
    <property type="entry name" value="Chitinase_II/V-like_cat"/>
</dbReference>
<dbReference type="InterPro" id="IPR029070">
    <property type="entry name" value="Chitinase_insertion_sf"/>
</dbReference>
<dbReference type="InterPro" id="IPR001223">
    <property type="entry name" value="Glyco_hydro18_cat"/>
</dbReference>
<dbReference type="InterPro" id="IPR001579">
    <property type="entry name" value="Glyco_hydro_18_chit_AS"/>
</dbReference>
<dbReference type="InterPro" id="IPR017853">
    <property type="entry name" value="Glycoside_hydrolase_SF"/>
</dbReference>
<dbReference type="InterPro" id="IPR050314">
    <property type="entry name" value="Glycosyl_Hydrlase_18"/>
</dbReference>
<dbReference type="PANTHER" id="PTHR11177">
    <property type="entry name" value="CHITINASE"/>
    <property type="match status" value="1"/>
</dbReference>
<dbReference type="PANTHER" id="PTHR11177:SF359">
    <property type="entry name" value="CHITINASE 10-RELATED"/>
    <property type="match status" value="1"/>
</dbReference>
<dbReference type="Pfam" id="PF01607">
    <property type="entry name" value="CBM_14"/>
    <property type="match status" value="4"/>
</dbReference>
<dbReference type="Pfam" id="PF00704">
    <property type="entry name" value="Glyco_hydro_18"/>
    <property type="match status" value="4"/>
</dbReference>
<dbReference type="SMART" id="SM00494">
    <property type="entry name" value="ChtBD2"/>
    <property type="match status" value="4"/>
</dbReference>
<dbReference type="SMART" id="SM00636">
    <property type="entry name" value="Glyco_18"/>
    <property type="match status" value="4"/>
</dbReference>
<dbReference type="SUPFAM" id="SSF51445">
    <property type="entry name" value="(Trans)glycosidases"/>
    <property type="match status" value="4"/>
</dbReference>
<dbReference type="SUPFAM" id="SSF54556">
    <property type="entry name" value="Chitinase insertion domain"/>
    <property type="match status" value="4"/>
</dbReference>
<dbReference type="SUPFAM" id="SSF57625">
    <property type="entry name" value="Invertebrate chitin-binding proteins"/>
    <property type="match status" value="4"/>
</dbReference>
<dbReference type="PROSITE" id="PS50940">
    <property type="entry name" value="CHIT_BIND_II"/>
    <property type="match status" value="4"/>
</dbReference>
<dbReference type="PROSITE" id="PS01095">
    <property type="entry name" value="GH18_1"/>
    <property type="match status" value="1"/>
</dbReference>
<dbReference type="PROSITE" id="PS51910">
    <property type="entry name" value="GH18_2"/>
    <property type="match status" value="4"/>
</dbReference>
<name>CHI10_DROME</name>
<gene>
    <name evidence="7" type="primary">Cht10</name>
    <name evidence="7" type="synonym">Cht1</name>
    <name evidence="7" type="synonym">Cht3</name>
    <name evidence="7" type="ORF">CG18140</name>
</gene>
<evidence type="ECO:0000255" key="1"/>
<evidence type="ECO:0000255" key="2">
    <source>
        <dbReference type="PROSITE-ProRule" id="PRU00144"/>
    </source>
</evidence>
<evidence type="ECO:0000255" key="3">
    <source>
        <dbReference type="PROSITE-ProRule" id="PRU01258"/>
    </source>
</evidence>
<evidence type="ECO:0000256" key="4">
    <source>
        <dbReference type="SAM" id="MobiDB-lite"/>
    </source>
</evidence>
<evidence type="ECO:0000269" key="5">
    <source>
    </source>
</evidence>
<evidence type="ECO:0000305" key="6"/>
<evidence type="ECO:0000312" key="7">
    <source>
        <dbReference type="FlyBase" id="FBgn0250907"/>
    </source>
</evidence>
<protein>
    <recommendedName>
        <fullName evidence="7">Probable chitinase 10</fullName>
        <ecNumber>3.2.1.14</ecNumber>
    </recommendedName>
    <alternativeName>
        <fullName>Probable chitinase 1</fullName>
    </alternativeName>
    <alternativeName>
        <fullName evidence="7">Probable chitinase 3</fullName>
    </alternativeName>
</protein>
<keyword id="KW-0119">Carbohydrate metabolism</keyword>
<keyword id="KW-0146">Chitin degradation</keyword>
<keyword id="KW-0147">Chitin-binding</keyword>
<keyword id="KW-1015">Disulfide bond</keyword>
<keyword id="KW-0326">Glycosidase</keyword>
<keyword id="KW-0378">Hydrolase</keyword>
<keyword id="KW-0624">Polysaccharide degradation</keyword>
<keyword id="KW-1185">Reference proteome</keyword>
<keyword id="KW-0677">Repeat</keyword>
<keyword id="KW-0732">Signal</keyword>
<reference key="1">
    <citation type="journal article" date="2000" name="Science">
        <title>The genome sequence of Drosophila melanogaster.</title>
        <authorList>
            <person name="Adams M.D."/>
            <person name="Celniker S.E."/>
            <person name="Holt R.A."/>
            <person name="Evans C.A."/>
            <person name="Gocayne J.D."/>
            <person name="Amanatides P.G."/>
            <person name="Scherer S.E."/>
            <person name="Li P.W."/>
            <person name="Hoskins R.A."/>
            <person name="Galle R.F."/>
            <person name="George R.A."/>
            <person name="Lewis S.E."/>
            <person name="Richards S."/>
            <person name="Ashburner M."/>
            <person name="Henderson S.N."/>
            <person name="Sutton G.G."/>
            <person name="Wortman J.R."/>
            <person name="Yandell M.D."/>
            <person name="Zhang Q."/>
            <person name="Chen L.X."/>
            <person name="Brandon R.C."/>
            <person name="Rogers Y.-H.C."/>
            <person name="Blazej R.G."/>
            <person name="Champe M."/>
            <person name="Pfeiffer B.D."/>
            <person name="Wan K.H."/>
            <person name="Doyle C."/>
            <person name="Baxter E.G."/>
            <person name="Helt G."/>
            <person name="Nelson C.R."/>
            <person name="Miklos G.L.G."/>
            <person name="Abril J.F."/>
            <person name="Agbayani A."/>
            <person name="An H.-J."/>
            <person name="Andrews-Pfannkoch C."/>
            <person name="Baldwin D."/>
            <person name="Ballew R.M."/>
            <person name="Basu A."/>
            <person name="Baxendale J."/>
            <person name="Bayraktaroglu L."/>
            <person name="Beasley E.M."/>
            <person name="Beeson K.Y."/>
            <person name="Benos P.V."/>
            <person name="Berman B.P."/>
            <person name="Bhandari D."/>
            <person name="Bolshakov S."/>
            <person name="Borkova D."/>
            <person name="Botchan M.R."/>
            <person name="Bouck J."/>
            <person name="Brokstein P."/>
            <person name="Brottier P."/>
            <person name="Burtis K.C."/>
            <person name="Busam D.A."/>
            <person name="Butler H."/>
            <person name="Cadieu E."/>
            <person name="Center A."/>
            <person name="Chandra I."/>
            <person name="Cherry J.M."/>
            <person name="Cawley S."/>
            <person name="Dahlke C."/>
            <person name="Davenport L.B."/>
            <person name="Davies P."/>
            <person name="de Pablos B."/>
            <person name="Delcher A."/>
            <person name="Deng Z."/>
            <person name="Mays A.D."/>
            <person name="Dew I."/>
            <person name="Dietz S.M."/>
            <person name="Dodson K."/>
            <person name="Doup L.E."/>
            <person name="Downes M."/>
            <person name="Dugan-Rocha S."/>
            <person name="Dunkov B.C."/>
            <person name="Dunn P."/>
            <person name="Durbin K.J."/>
            <person name="Evangelista C.C."/>
            <person name="Ferraz C."/>
            <person name="Ferriera S."/>
            <person name="Fleischmann W."/>
            <person name="Fosler C."/>
            <person name="Gabrielian A.E."/>
            <person name="Garg N.S."/>
            <person name="Gelbart W.M."/>
            <person name="Glasser K."/>
            <person name="Glodek A."/>
            <person name="Gong F."/>
            <person name="Gorrell J.H."/>
            <person name="Gu Z."/>
            <person name="Guan P."/>
            <person name="Harris M."/>
            <person name="Harris N.L."/>
            <person name="Harvey D.A."/>
            <person name="Heiman T.J."/>
            <person name="Hernandez J.R."/>
            <person name="Houck J."/>
            <person name="Hostin D."/>
            <person name="Houston K.A."/>
            <person name="Howland T.J."/>
            <person name="Wei M.-H."/>
            <person name="Ibegwam C."/>
            <person name="Jalali M."/>
            <person name="Kalush F."/>
            <person name="Karpen G.H."/>
            <person name="Ke Z."/>
            <person name="Kennison J.A."/>
            <person name="Ketchum K.A."/>
            <person name="Kimmel B.E."/>
            <person name="Kodira C.D."/>
            <person name="Kraft C.L."/>
            <person name="Kravitz S."/>
            <person name="Kulp D."/>
            <person name="Lai Z."/>
            <person name="Lasko P."/>
            <person name="Lei Y."/>
            <person name="Levitsky A.A."/>
            <person name="Li J.H."/>
            <person name="Li Z."/>
            <person name="Liang Y."/>
            <person name="Lin X."/>
            <person name="Liu X."/>
            <person name="Mattei B."/>
            <person name="McIntosh T.C."/>
            <person name="McLeod M.P."/>
            <person name="McPherson D."/>
            <person name="Merkulov G."/>
            <person name="Milshina N.V."/>
            <person name="Mobarry C."/>
            <person name="Morris J."/>
            <person name="Moshrefi A."/>
            <person name="Mount S.M."/>
            <person name="Moy M."/>
            <person name="Murphy B."/>
            <person name="Murphy L."/>
            <person name="Muzny D.M."/>
            <person name="Nelson D.L."/>
            <person name="Nelson D.R."/>
            <person name="Nelson K.A."/>
            <person name="Nixon K."/>
            <person name="Nusskern D.R."/>
            <person name="Pacleb J.M."/>
            <person name="Palazzolo M."/>
            <person name="Pittman G.S."/>
            <person name="Pan S."/>
            <person name="Pollard J."/>
            <person name="Puri V."/>
            <person name="Reese M.G."/>
            <person name="Reinert K."/>
            <person name="Remington K."/>
            <person name="Saunders R.D.C."/>
            <person name="Scheeler F."/>
            <person name="Shen H."/>
            <person name="Shue B.C."/>
            <person name="Siden-Kiamos I."/>
            <person name="Simpson M."/>
            <person name="Skupski M.P."/>
            <person name="Smith T.J."/>
            <person name="Spier E."/>
            <person name="Spradling A.C."/>
            <person name="Stapleton M."/>
            <person name="Strong R."/>
            <person name="Sun E."/>
            <person name="Svirskas R."/>
            <person name="Tector C."/>
            <person name="Turner R."/>
            <person name="Venter E."/>
            <person name="Wang A.H."/>
            <person name="Wang X."/>
            <person name="Wang Z.-Y."/>
            <person name="Wassarman D.A."/>
            <person name="Weinstock G.M."/>
            <person name="Weissenbach J."/>
            <person name="Williams S.M."/>
            <person name="Woodage T."/>
            <person name="Worley K.C."/>
            <person name="Wu D."/>
            <person name="Yang S."/>
            <person name="Yao Q.A."/>
            <person name="Ye J."/>
            <person name="Yeh R.-F."/>
            <person name="Zaveri J.S."/>
            <person name="Zhan M."/>
            <person name="Zhang G."/>
            <person name="Zhao Q."/>
            <person name="Zheng L."/>
            <person name="Zheng X.H."/>
            <person name="Zhong F.N."/>
            <person name="Zhong W."/>
            <person name="Zhou X."/>
            <person name="Zhu S.C."/>
            <person name="Zhu X."/>
            <person name="Smith H.O."/>
            <person name="Gibbs R.A."/>
            <person name="Myers E.W."/>
            <person name="Rubin G.M."/>
            <person name="Venter J.C."/>
        </authorList>
    </citation>
    <scope>NUCLEOTIDE SEQUENCE [LARGE SCALE GENOMIC DNA]</scope>
    <source>
        <strain>Berkeley</strain>
    </source>
</reference>
<reference key="2">
    <citation type="journal article" date="2002" name="Genome Biol.">
        <title>Annotation of the Drosophila melanogaster euchromatic genome: a systematic review.</title>
        <authorList>
            <person name="Misra S."/>
            <person name="Crosby M.A."/>
            <person name="Mungall C.J."/>
            <person name="Matthews B.B."/>
            <person name="Campbell K.S."/>
            <person name="Hradecky P."/>
            <person name="Huang Y."/>
            <person name="Kaminker J.S."/>
            <person name="Millburn G.H."/>
            <person name="Prochnik S.E."/>
            <person name="Smith C.D."/>
            <person name="Tupy J.L."/>
            <person name="Whitfield E.J."/>
            <person name="Bayraktaroglu L."/>
            <person name="Berman B.P."/>
            <person name="Bettencourt B.R."/>
            <person name="Celniker S.E."/>
            <person name="de Grey A.D.N.J."/>
            <person name="Drysdale R.A."/>
            <person name="Harris N.L."/>
            <person name="Richter J."/>
            <person name="Russo S."/>
            <person name="Schroeder A.J."/>
            <person name="Shu S.Q."/>
            <person name="Stapleton M."/>
            <person name="Yamada C."/>
            <person name="Ashburner M."/>
            <person name="Gelbart W.M."/>
            <person name="Rubin G.M."/>
            <person name="Lewis S.E."/>
        </authorList>
    </citation>
    <scope>GENOME REANNOTATION</scope>
    <source>
        <strain>Berkeley</strain>
    </source>
</reference>
<reference key="3">
    <citation type="submission" date="2005-03" db="EMBL/GenBank/DDBJ databases">
        <authorList>
            <person name="Stapleton M."/>
            <person name="Carlson J.W."/>
            <person name="Chavez C."/>
            <person name="Frise E."/>
            <person name="George R.A."/>
            <person name="Pacleb J.M."/>
            <person name="Park S."/>
            <person name="Wan K.H."/>
            <person name="Yu C."/>
            <person name="Rubin G.M."/>
            <person name="Celniker S.E."/>
        </authorList>
    </citation>
    <scope>NUCLEOTIDE SEQUENCE [LARGE SCALE MRNA]</scope>
    <source>
        <strain>Berkeley</strain>
        <tissue>Larva</tissue>
        <tissue>Pupae</tissue>
    </source>
</reference>
<reference evidence="6" key="4">
    <citation type="journal article" date="1998" name="Insect Mol. Biol.">
        <title>Chitinases are a multi-gene family in Aedes, Anopheles and Drosophila.</title>
        <authorList>
            <person name="de la Vega H."/>
            <person name="Specht C.A."/>
            <person name="Liu Y."/>
            <person name="Robbins P.W."/>
        </authorList>
    </citation>
    <scope>NUCLEOTIDE SEQUENCE [GENOMIC DNA] OF 974-1086 AND 1418-1530</scope>
    <source>
        <strain evidence="5">Canton-S</strain>
    </source>
</reference>
<reference key="5">
    <citation type="journal article" date="2002" name="Genome Biol.">
        <title>A Drosophila full-length cDNA resource.</title>
        <authorList>
            <person name="Stapleton M."/>
            <person name="Carlson J.W."/>
            <person name="Brokstein P."/>
            <person name="Yu C."/>
            <person name="Champe M."/>
            <person name="George R.A."/>
            <person name="Guarin H."/>
            <person name="Kronmiller B."/>
            <person name="Pacleb J.M."/>
            <person name="Park S."/>
            <person name="Wan K.H."/>
            <person name="Rubin G.M."/>
            <person name="Celniker S.E."/>
        </authorList>
    </citation>
    <scope>NUCLEOTIDE SEQUENCE [LARGE SCALE MRNA] OF 1567-2286</scope>
    <source>
        <strain>Berkeley</strain>
        <tissue>Larva</tissue>
        <tissue>Pupae</tissue>
    </source>
</reference>
<sequence length="2286" mass="258777">MHPYVPSVLVVVVLAISVKAHIRVDKLQIHSESNYKPAFIRSAVESIPLDIDAILLLRNSTKPEFGDAFLPLRSAVESIPKLYQSNTSRFRKNPDVRSFVRDSVESLPNDEDGLEHIEIFTKYYNSVSDVAGVDLKSKKLTHVNLDPGTISDKYAAFIARGNSEDYYPKSYRAGSPHQELLKMMNIEHTDKLDRYSDLQHQQSYGALGLANRNDLKMTKKVLCYMSNWAFYRSGEAHFVPEQIDPNLCSAIIYSFASLDPDHLTIREFDSWVDLDNQYYRRVTSLGVPVLIALGGWTDSSGSKYSRLVSDNLKRRVFISSVSSFLLRHGFSGLHLDWNYPKCWQSDCSRGPVTDRPNLTKLLRELRTEFQSVDPKFQLGVAISGYKEIIKEAYDFPALSDIVDYMTVMTYDYHGAWEQKTGHVSPLYGLSSDTYPQYNTNYTMQLLLKMGARREKLVLSIPFYGQSFTLATAHQILAGPGVAASGPGDAGELTKQPGMLAYYEICQRLTKFNWISDRNLNVIFGPFAMLNDQWVGYEDPTSAQAKARYAANNNFAGVAAWTIDLDDFRNLCCNESYPLLRAINRALGRLDSEPPTQPNCKRPTLLATPVPPQMTTISSDGSGGLGQNHDHTTSLPSGQISSSPVSTTITSTFPWWSSTTKRPREPTKTTAQPTHTTILIPAGINPVVQPSNCKSGEFFADSNNCNAYYHCFFAGELQQQFCPSGLHWNNEAKGCDWPSSAQCSLKLDQHLSTSYPNPIQTSKKPETTLKPNKKPSEISTHHQVNSTSSRPQYMRPTILECTEGDYYPHRNCRKYYICVNKALVPSECGGDLHWDGIKKLCDWPENVQCVTSKKYLKIIKSSSANEEDPCKGEKRVPYPGNCSKYLFCLWNRLQASDCPPGLHYNERIGNCDWPAAAKCNPKGSESSEEAELNAMPKPPTPQTPSSHLRPTYPTEKPVPKPRDSHYKVICYFTNWAWYRKGIGRFTPDDINTELCTHVIYGFAVLDYSELVLRTHDSWADVENNFYTRVTSLKSKGIKVSLALGGWNDSQGDKYSRLVRSPMARSRFVRHALEFIEKYGFEGLDLDWEYPVCWQTECNKGSTEEKDGFTAWVQELSEAFRPRGLMLSTAVSPSRKIIDAGYDIPQLSRYFDWIAVMTYDFHGHWDKKTGHVAPLYHHPDDDFEYFNVNYSINYWMEKGAPSQKLVMGIPLYGQSFTLENTNSSGLNAKAPAPGEAGEFTRAAGFLAYYEICERVNRQGWQVVHDEFGRMGPYAYKGTQWVSYDSPDMVRKKSLLVRSLKLGGGMVWALDLDDFKNRCGNGVHPLLTEIHNVLKDPPSLMEIPGPIETTPTEYPGMEEEIHESNGEGPEVQPIEAVMQTCENEGEEHEGILDPNHVLEEENIEATEMATEFKIICYFTNWAWYRQGGGKFLPEDIDSDLCTHIIYGFAVLSRDNLTIQPHDSWADLDNKFYERIVAYRKKGAKVTVAIGGWNDSAGDKYSRLVRNPEARSRFIRNVLDFIEEYNFDGLDLDWEYPVCWQVDCKKGTAEEKIGFSALVRELFYAFQPRGLILSAAVSPNKKVIDAGYEVAELSHYFSWISVMAYDYHGQWDKKTGHVAPMYSHPEGTANFNANFSMNYWISMGADRRKLVMGIPLYGQSFSLAETTKHQLNAPTYGGGEAGEATRARGFLAYYEICLKIRHHRWNVVRDTKGRIGPFAYHGDQWVSFDDVPMIRHKSEYIKAMGLGGAMIWALDLDDFKNVCECESYPLLKAINRVLRGFGGPQPKCLLENPKSTMKPNIKPPFRPTINAPSGPNLDSPTQNVSLNVLSIKCHSKNYLAHEWDCTKYYICEHGTYVERSCPLGLQWNKTYCDWPTNVQSSLGSNQRTQEPAVHRPNPTSVITEPPIINNSYKVVCYFTSWAWYRSSQGKFVPEDIDANLCTHLIYGFAVLDSKSLTIKTHDSWTDIDNRFYERVVEYKQRGLRVMLAIGGWNDSLGSKYARLVLNSQSRRRFVASVISFLEQHGFEGLDLAWEFPVCWQVNCNRGNPTEKDGFVALVKELSEAFKENGLILSAAVSPSKMVIDAGYNVFELSPYFDWVAVMTYDFHGHWDMRTGQIAPLFHRGGDENLYLNGNFSIHYWLERGIPNDKLVMGMPMYGQTFTLADQNRRSLNDKTVGPGKAGTFTRADGFLAYYEICEKVVNDDWKVVRDEEGIFGSYAYSGNQWISYDDVTTIRRKSQFIKSLQLGGGMIWALDLDDFRGLCGCGKHPLLRTLSQELLGIPGQKAKDCI</sequence>
<accession>Q9W5U2</accession>
<accession>O17420</accession>
<accession>O17422</accession>
<accession>Q7PL80</accession>
<accession>Q8MS85</accession>
<accession>Q9W5U3</accession>
<proteinExistence type="evidence at transcript level"/>
<organism>
    <name type="scientific">Drosophila melanogaster</name>
    <name type="common">Fruit fly</name>
    <dbReference type="NCBI Taxonomy" id="7227"/>
    <lineage>
        <taxon>Eukaryota</taxon>
        <taxon>Metazoa</taxon>
        <taxon>Ecdysozoa</taxon>
        <taxon>Arthropoda</taxon>
        <taxon>Hexapoda</taxon>
        <taxon>Insecta</taxon>
        <taxon>Pterygota</taxon>
        <taxon>Neoptera</taxon>
        <taxon>Endopterygota</taxon>
        <taxon>Diptera</taxon>
        <taxon>Brachycera</taxon>
        <taxon>Muscomorpha</taxon>
        <taxon>Ephydroidea</taxon>
        <taxon>Drosophilidae</taxon>
        <taxon>Drosophila</taxon>
        <taxon>Sophophora</taxon>
    </lineage>
</organism>
<feature type="signal peptide" evidence="1">
    <location>
        <begin position="1"/>
        <end position="20"/>
    </location>
</feature>
<feature type="chain" id="PRO_0000077051" description="Probable chitinase 10">
    <location>
        <begin position="21"/>
        <end position="2286"/>
    </location>
</feature>
<feature type="domain" description="GH18 1" evidence="3">
    <location>
        <begin position="219"/>
        <end position="589"/>
    </location>
</feature>
<feature type="domain" description="Chitin-binding type-2 1" evidence="2">
    <location>
        <begin position="689"/>
        <end position="744"/>
    </location>
</feature>
<feature type="domain" description="Chitin-binding type-2 2" evidence="2">
    <location>
        <begin position="797"/>
        <end position="850"/>
    </location>
</feature>
<feature type="domain" description="Chitin-binding type-2 3" evidence="2">
    <location>
        <begin position="866"/>
        <end position="920"/>
    </location>
</feature>
<feature type="domain" description="GH18 2" evidence="3">
    <location>
        <begin position="965"/>
        <end position="1334"/>
    </location>
</feature>
<feature type="domain" description="GH18 3" evidence="3">
    <location>
        <begin position="1409"/>
        <end position="1777"/>
    </location>
</feature>
<feature type="domain" description="Chitin-binding type-2 4" evidence="2">
    <location>
        <begin position="1826"/>
        <end position="1878"/>
    </location>
</feature>
<feature type="domain" description="GH18 4" evidence="3">
    <location>
        <begin position="1908"/>
        <end position="2277"/>
    </location>
</feature>
<feature type="region of interest" description="Disordered" evidence="4">
    <location>
        <begin position="592"/>
        <end position="645"/>
    </location>
</feature>
<feature type="region of interest" description="Disordered" evidence="4">
    <location>
        <begin position="753"/>
        <end position="789"/>
    </location>
</feature>
<feature type="region of interest" description="Disordered" evidence="4">
    <location>
        <begin position="921"/>
        <end position="958"/>
    </location>
</feature>
<feature type="compositionally biased region" description="Polar residues" evidence="4">
    <location>
        <begin position="780"/>
        <end position="789"/>
    </location>
</feature>
<feature type="active site" description="Proton donor" evidence="3">
    <location>
        <position position="1087"/>
    </location>
</feature>
<feature type="active site" description="Proton donor" evidence="3">
    <location>
        <position position="1531"/>
    </location>
</feature>
<feature type="active site" description="Proton donor" evidence="3">
    <location>
        <position position="2030"/>
    </location>
</feature>
<feature type="binding site" evidence="3">
    <location>
        <position position="266"/>
    </location>
    <ligand>
        <name>chitin</name>
        <dbReference type="ChEBI" id="CHEBI:17029"/>
    </ligand>
</feature>
<feature type="binding site" evidence="3">
    <location>
        <begin position="294"/>
        <end position="297"/>
    </location>
    <ligand>
        <name>chitin</name>
        <dbReference type="ChEBI" id="CHEBI:17029"/>
    </ligand>
</feature>
<feature type="binding site" evidence="3">
    <location>
        <position position="339"/>
    </location>
    <ligand>
        <name>chitin</name>
        <dbReference type="ChEBI" id="CHEBI:17029"/>
    </ligand>
</feature>
<feature type="binding site" evidence="3">
    <location>
        <begin position="408"/>
        <end position="411"/>
    </location>
    <ligand>
        <name>chitin</name>
        <dbReference type="ChEBI" id="CHEBI:17029"/>
    </ligand>
</feature>
<feature type="binding site" evidence="3">
    <location>
        <position position="560"/>
    </location>
    <ligand>
        <name>chitin</name>
        <dbReference type="ChEBI" id="CHEBI:17029"/>
    </ligand>
</feature>
<feature type="binding site" evidence="3">
    <location>
        <begin position="1018"/>
        <end position="1019"/>
    </location>
    <ligand>
        <name>chitin</name>
        <dbReference type="ChEBI" id="CHEBI:17029"/>
    </ligand>
</feature>
<feature type="binding site" evidence="3">
    <location>
        <begin position="1043"/>
        <end position="1046"/>
    </location>
    <ligand>
        <name>chitin</name>
        <dbReference type="ChEBI" id="CHEBI:17029"/>
    </ligand>
</feature>
<feature type="binding site" evidence="3">
    <location>
        <position position="1088"/>
    </location>
    <ligand>
        <name>chitin</name>
        <dbReference type="ChEBI" id="CHEBI:17029"/>
    </ligand>
</feature>
<feature type="binding site" evidence="3">
    <location>
        <begin position="1155"/>
        <end position="1158"/>
    </location>
    <ligand>
        <name>chitin</name>
        <dbReference type="ChEBI" id="CHEBI:17029"/>
    </ligand>
</feature>
<feature type="binding site" evidence="3">
    <location>
        <position position="1305"/>
    </location>
    <ligand>
        <name>chitin</name>
        <dbReference type="ChEBI" id="CHEBI:17029"/>
    </ligand>
</feature>
<feature type="binding site" evidence="3">
    <location>
        <begin position="1462"/>
        <end position="1463"/>
    </location>
    <ligand>
        <name>chitin</name>
        <dbReference type="ChEBI" id="CHEBI:17029"/>
    </ligand>
</feature>
<feature type="binding site" evidence="3">
    <location>
        <begin position="1487"/>
        <end position="1490"/>
    </location>
    <ligand>
        <name>chitin</name>
        <dbReference type="ChEBI" id="CHEBI:17029"/>
    </ligand>
</feature>
<feature type="binding site" evidence="3">
    <location>
        <position position="1532"/>
    </location>
    <ligand>
        <name>chitin</name>
        <dbReference type="ChEBI" id="CHEBI:17029"/>
    </ligand>
</feature>
<feature type="binding site" evidence="3">
    <location>
        <begin position="1599"/>
        <end position="1602"/>
    </location>
    <ligand>
        <name>chitin</name>
        <dbReference type="ChEBI" id="CHEBI:17029"/>
    </ligand>
</feature>
<feature type="binding site" evidence="3">
    <location>
        <position position="1748"/>
    </location>
    <ligand>
        <name>chitin</name>
        <dbReference type="ChEBI" id="CHEBI:17029"/>
    </ligand>
</feature>
<feature type="disulfide bond" evidence="3">
    <location>
        <begin position="223"/>
        <end position="248"/>
    </location>
</feature>
<feature type="disulfide bond" evidence="2">
    <location>
        <begin position="721"/>
        <end position="734"/>
    </location>
</feature>
<feature type="disulfide bond" evidence="2">
    <location>
        <begin position="827"/>
        <end position="840"/>
    </location>
</feature>
<feature type="disulfide bond" evidence="2">
    <location>
        <begin position="897"/>
        <end position="910"/>
    </location>
</feature>
<feature type="disulfide bond" evidence="3">
    <location>
        <begin position="969"/>
        <end position="994"/>
    </location>
</feature>
<feature type="disulfide bond" evidence="3">
    <location>
        <begin position="1413"/>
        <end position="1438"/>
    </location>
</feature>
<feature type="disulfide bond" evidence="2">
    <location>
        <begin position="1857"/>
        <end position="1868"/>
    </location>
</feature>
<feature type="disulfide bond" evidence="3">
    <location>
        <begin position="1912"/>
        <end position="1937"/>
    </location>
</feature>